<organism>
    <name type="scientific">Cryptococcus neoformans var. neoformans serotype D (strain B-3501A)</name>
    <name type="common">Filobasidiella neoformans</name>
    <dbReference type="NCBI Taxonomy" id="283643"/>
    <lineage>
        <taxon>Eukaryota</taxon>
        <taxon>Fungi</taxon>
        <taxon>Dikarya</taxon>
        <taxon>Basidiomycota</taxon>
        <taxon>Agaricomycotina</taxon>
        <taxon>Tremellomycetes</taxon>
        <taxon>Tremellales</taxon>
        <taxon>Cryptococcaceae</taxon>
        <taxon>Cryptococcus</taxon>
        <taxon>Cryptococcus neoformans species complex</taxon>
    </lineage>
</organism>
<keyword id="KW-0539">Nucleus</keyword>
<keyword id="KW-0677">Repeat</keyword>
<keyword id="KW-0687">Ribonucleoprotein</keyword>
<keyword id="KW-0690">Ribosome biogenesis</keyword>
<keyword id="KW-0694">RNA-binding</keyword>
<keyword id="KW-0698">rRNA processing</keyword>
<proteinExistence type="inferred from homology"/>
<dbReference type="EMBL" id="AAEY01000042">
    <property type="protein sequence ID" value="EAL19280.1"/>
    <property type="molecule type" value="Genomic_DNA"/>
</dbReference>
<dbReference type="RefSeq" id="XP_773927.1">
    <property type="nucleotide sequence ID" value="XM_768834.1"/>
</dbReference>
<dbReference type="SMR" id="P0CN79"/>
<dbReference type="EnsemblFungi" id="AAW45593">
    <property type="protein sequence ID" value="AAW45593"/>
    <property type="gene ID" value="CNI03970"/>
</dbReference>
<dbReference type="GeneID" id="4937906"/>
<dbReference type="KEGG" id="cnb:CNBH3790"/>
<dbReference type="VEuPathDB" id="FungiDB:CNBH3790"/>
<dbReference type="HOGENOM" id="CLU_080002_1_0_1"/>
<dbReference type="OrthoDB" id="9302at5206"/>
<dbReference type="GO" id="GO:0031429">
    <property type="term" value="C:box H/ACA snoRNP complex"/>
    <property type="evidence" value="ECO:0007669"/>
    <property type="project" value="EnsemblFungi"/>
</dbReference>
<dbReference type="GO" id="GO:0034513">
    <property type="term" value="F:box H/ACA snoRNA binding"/>
    <property type="evidence" value="ECO:0007669"/>
    <property type="project" value="EnsemblFungi"/>
</dbReference>
<dbReference type="GO" id="GO:0000454">
    <property type="term" value="P:snoRNA guided rRNA pseudouridine synthesis"/>
    <property type="evidence" value="ECO:0007669"/>
    <property type="project" value="EnsemblFungi"/>
</dbReference>
<dbReference type="GO" id="GO:0031120">
    <property type="term" value="P:snRNA pseudouridine synthesis"/>
    <property type="evidence" value="ECO:0007669"/>
    <property type="project" value="EnsemblFungi"/>
</dbReference>
<dbReference type="FunFam" id="2.40.10.230:FF:000001">
    <property type="entry name" value="H/ACA ribonucleoprotein complex subunit"/>
    <property type="match status" value="1"/>
</dbReference>
<dbReference type="Gene3D" id="2.40.10.230">
    <property type="entry name" value="Probable tRNA pseudouridine synthase domain"/>
    <property type="match status" value="1"/>
</dbReference>
<dbReference type="InterPro" id="IPR038664">
    <property type="entry name" value="Gar1/Naf1_Cbf5-bd_sf"/>
</dbReference>
<dbReference type="InterPro" id="IPR007504">
    <property type="entry name" value="H/ACA_rnp_Gar1/Naf1"/>
</dbReference>
<dbReference type="InterPro" id="IPR009000">
    <property type="entry name" value="Transl_B-barrel_sf"/>
</dbReference>
<dbReference type="PANTHER" id="PTHR23237:SF6">
    <property type="entry name" value="H_ACA RIBONUCLEOPROTEIN COMPLEX SUBUNIT 1"/>
    <property type="match status" value="1"/>
</dbReference>
<dbReference type="PANTHER" id="PTHR23237">
    <property type="entry name" value="NUCLEOLAR PROTEIN FAMILY A MEMBER 1 SNORNP PROTEIN GAR1"/>
    <property type="match status" value="1"/>
</dbReference>
<dbReference type="Pfam" id="PF04410">
    <property type="entry name" value="Gar1"/>
    <property type="match status" value="1"/>
</dbReference>
<dbReference type="SUPFAM" id="SSF50447">
    <property type="entry name" value="Translation proteins"/>
    <property type="match status" value="1"/>
</dbReference>
<gene>
    <name type="primary">GAR1</name>
    <name type="ordered locus">CNBH3790</name>
</gene>
<reference key="1">
    <citation type="journal article" date="2005" name="Science">
        <title>The genome of the basidiomycetous yeast and human pathogen Cryptococcus neoformans.</title>
        <authorList>
            <person name="Loftus B.J."/>
            <person name="Fung E."/>
            <person name="Roncaglia P."/>
            <person name="Rowley D."/>
            <person name="Amedeo P."/>
            <person name="Bruno D."/>
            <person name="Vamathevan J."/>
            <person name="Miranda M."/>
            <person name="Anderson I.J."/>
            <person name="Fraser J.A."/>
            <person name="Allen J.E."/>
            <person name="Bosdet I.E."/>
            <person name="Brent M.R."/>
            <person name="Chiu R."/>
            <person name="Doering T.L."/>
            <person name="Donlin M.J."/>
            <person name="D'Souza C.A."/>
            <person name="Fox D.S."/>
            <person name="Grinberg V."/>
            <person name="Fu J."/>
            <person name="Fukushima M."/>
            <person name="Haas B.J."/>
            <person name="Huang J.C."/>
            <person name="Janbon G."/>
            <person name="Jones S.J.M."/>
            <person name="Koo H.L."/>
            <person name="Krzywinski M.I."/>
            <person name="Kwon-Chung K.J."/>
            <person name="Lengeler K.B."/>
            <person name="Maiti R."/>
            <person name="Marra M.A."/>
            <person name="Marra R.E."/>
            <person name="Mathewson C.A."/>
            <person name="Mitchell T.G."/>
            <person name="Pertea M."/>
            <person name="Riggs F.R."/>
            <person name="Salzberg S.L."/>
            <person name="Schein J.E."/>
            <person name="Shvartsbeyn A."/>
            <person name="Shin H."/>
            <person name="Shumway M."/>
            <person name="Specht C.A."/>
            <person name="Suh B.B."/>
            <person name="Tenney A."/>
            <person name="Utterback T.R."/>
            <person name="Wickes B.L."/>
            <person name="Wortman J.R."/>
            <person name="Wye N.H."/>
            <person name="Kronstad J.W."/>
            <person name="Lodge J.K."/>
            <person name="Heitman J."/>
            <person name="Davis R.W."/>
            <person name="Fraser C.M."/>
            <person name="Hyman R.W."/>
        </authorList>
    </citation>
    <scope>NUCLEOTIDE SEQUENCE [LARGE SCALE GENOMIC DNA]</scope>
    <source>
        <strain>B-3501A</strain>
    </source>
</reference>
<name>GAR1_CRYNB</name>
<feature type="chain" id="PRO_0000410094" description="H/ACA ribonucleoprotein complex subunit GAR1">
    <location>
        <begin position="1"/>
        <end position="203"/>
    </location>
</feature>
<feature type="region of interest" description="Disordered" evidence="2">
    <location>
        <begin position="1"/>
        <end position="38"/>
    </location>
</feature>
<feature type="region of interest" description="RGG-box 1">
    <location>
        <begin position="4"/>
        <end position="28"/>
    </location>
</feature>
<feature type="region of interest" description="Disordered" evidence="2">
    <location>
        <begin position="131"/>
        <end position="203"/>
    </location>
</feature>
<feature type="region of interest" description="RGG-box 2">
    <location>
        <begin position="150"/>
        <end position="202"/>
    </location>
</feature>
<feature type="compositionally biased region" description="Gly residues" evidence="2">
    <location>
        <begin position="1"/>
        <end position="28"/>
    </location>
</feature>
<feature type="compositionally biased region" description="Gly residues" evidence="2">
    <location>
        <begin position="140"/>
        <end position="195"/>
    </location>
</feature>
<evidence type="ECO:0000250" key="1">
    <source>
        <dbReference type="UniProtKB" id="P28007"/>
    </source>
</evidence>
<evidence type="ECO:0000256" key="2">
    <source>
        <dbReference type="SAM" id="MobiDB-lite"/>
    </source>
</evidence>
<evidence type="ECO:0000305" key="3"/>
<sequence>MSGRGFSRGGGGGFRGGARGGRGGGRGGFQQRDMGPPDTVLEIGSFQHDVESEMLCSLTAPTKIPYFNAPIYLQNKTQIGKVDEILGPINEVYFTVKMEQGMLASSFKKEDKVYISGEKLLPIERFLPKPKVAGGKERGAQGGRGAPRGRGGAGSRGGRGGFSSRGGPGGRGGARGGAGGRGGFSSRGGGAPRGRGGFRGRGQ</sequence>
<protein>
    <recommendedName>
        <fullName>H/ACA ribonucleoprotein complex subunit GAR1</fullName>
    </recommendedName>
    <alternativeName>
        <fullName>snoRNP protein GAR1</fullName>
    </alternativeName>
</protein>
<accession>P0CN79</accession>
<accession>Q55MQ5</accession>
<accession>Q5KB30</accession>
<comment type="function">
    <text evidence="1">Non-catalytic component of the H/ACA small nucleolar ribonucleoprotein (H/ACA snoRNP), which catalyzes pseudouridylation of rRNA and is required for ribosome biogenesis. This involves the isomerization of uridine such that the ribose is subsequently attached to C5, instead of the normal N1. Pseudouridine ('psi') residues may serve to stabilize the conformation of rRNAs. The H/ACA snoRNP complex also mediates pseudouridylation of other types of RNAs. The H/ACA snoRNP complex mediates pseudouridylation at position 93 in U2 snRNA.</text>
</comment>
<comment type="subunit">
    <text evidence="1">Component of the small nucleolar ribonucleoprotein particles containing H/ACA-type snoRNAs (H/ACA snoRNPs).</text>
</comment>
<comment type="subcellular location">
    <subcellularLocation>
        <location evidence="1">Nucleus</location>
        <location evidence="1">Nucleolus</location>
    </subcellularLocation>
</comment>
<comment type="similarity">
    <text evidence="3">Belongs to the GAR1 family.</text>
</comment>